<dbReference type="EC" id="2.7.7.6" evidence="1"/>
<dbReference type="EMBL" id="CP000411">
    <property type="protein sequence ID" value="ABJ57237.1"/>
    <property type="molecule type" value="Genomic_DNA"/>
</dbReference>
<dbReference type="RefSeq" id="WP_011677689.1">
    <property type="nucleotide sequence ID" value="NC_008528.1"/>
</dbReference>
<dbReference type="SMR" id="Q04E85"/>
<dbReference type="STRING" id="203123.OEOE_1375"/>
<dbReference type="KEGG" id="ooe:OEOE_1375"/>
<dbReference type="PATRIC" id="fig|203123.7.peg.1389"/>
<dbReference type="eggNOG" id="COG0085">
    <property type="taxonomic scope" value="Bacteria"/>
</dbReference>
<dbReference type="HOGENOM" id="CLU_000524_4_1_9"/>
<dbReference type="Proteomes" id="UP000000774">
    <property type="component" value="Chromosome"/>
</dbReference>
<dbReference type="GO" id="GO:0000428">
    <property type="term" value="C:DNA-directed RNA polymerase complex"/>
    <property type="evidence" value="ECO:0007669"/>
    <property type="project" value="UniProtKB-KW"/>
</dbReference>
<dbReference type="GO" id="GO:0003677">
    <property type="term" value="F:DNA binding"/>
    <property type="evidence" value="ECO:0007669"/>
    <property type="project" value="UniProtKB-UniRule"/>
</dbReference>
<dbReference type="GO" id="GO:0003899">
    <property type="term" value="F:DNA-directed RNA polymerase activity"/>
    <property type="evidence" value="ECO:0007669"/>
    <property type="project" value="UniProtKB-UniRule"/>
</dbReference>
<dbReference type="GO" id="GO:0032549">
    <property type="term" value="F:ribonucleoside binding"/>
    <property type="evidence" value="ECO:0007669"/>
    <property type="project" value="InterPro"/>
</dbReference>
<dbReference type="GO" id="GO:0006351">
    <property type="term" value="P:DNA-templated transcription"/>
    <property type="evidence" value="ECO:0007669"/>
    <property type="project" value="UniProtKB-UniRule"/>
</dbReference>
<dbReference type="CDD" id="cd00653">
    <property type="entry name" value="RNA_pol_B_RPB2"/>
    <property type="match status" value="1"/>
</dbReference>
<dbReference type="FunFam" id="3.90.1800.10:FF:000001">
    <property type="entry name" value="DNA-directed RNA polymerase subunit beta"/>
    <property type="match status" value="1"/>
</dbReference>
<dbReference type="Gene3D" id="2.40.50.100">
    <property type="match status" value="1"/>
</dbReference>
<dbReference type="Gene3D" id="2.40.50.150">
    <property type="match status" value="1"/>
</dbReference>
<dbReference type="Gene3D" id="3.90.1100.10">
    <property type="match status" value="2"/>
</dbReference>
<dbReference type="Gene3D" id="2.30.150.10">
    <property type="entry name" value="DNA-directed RNA polymerase, beta subunit, external 1 domain"/>
    <property type="match status" value="1"/>
</dbReference>
<dbReference type="Gene3D" id="2.40.270.10">
    <property type="entry name" value="DNA-directed RNA polymerase, subunit 2, domain 6"/>
    <property type="match status" value="2"/>
</dbReference>
<dbReference type="Gene3D" id="3.90.1800.10">
    <property type="entry name" value="RNA polymerase alpha subunit dimerisation domain"/>
    <property type="match status" value="1"/>
</dbReference>
<dbReference type="Gene3D" id="3.90.1110.10">
    <property type="entry name" value="RNA polymerase Rpb2, domain 2"/>
    <property type="match status" value="2"/>
</dbReference>
<dbReference type="HAMAP" id="MF_01321">
    <property type="entry name" value="RNApol_bact_RpoB"/>
    <property type="match status" value="1"/>
</dbReference>
<dbReference type="InterPro" id="IPR042107">
    <property type="entry name" value="DNA-dir_RNA_pol_bsu_ext_1_sf"/>
</dbReference>
<dbReference type="InterPro" id="IPR019462">
    <property type="entry name" value="DNA-dir_RNA_pol_bsu_external_1"/>
</dbReference>
<dbReference type="InterPro" id="IPR015712">
    <property type="entry name" value="DNA-dir_RNA_pol_su2"/>
</dbReference>
<dbReference type="InterPro" id="IPR007120">
    <property type="entry name" value="DNA-dir_RNAP_su2_dom"/>
</dbReference>
<dbReference type="InterPro" id="IPR037033">
    <property type="entry name" value="DNA-dir_RNAP_su2_hyb_sf"/>
</dbReference>
<dbReference type="InterPro" id="IPR010243">
    <property type="entry name" value="RNA_pol_bsu_bac"/>
</dbReference>
<dbReference type="InterPro" id="IPR007121">
    <property type="entry name" value="RNA_pol_bsu_CS"/>
</dbReference>
<dbReference type="InterPro" id="IPR007644">
    <property type="entry name" value="RNA_pol_bsu_protrusion"/>
</dbReference>
<dbReference type="InterPro" id="IPR007642">
    <property type="entry name" value="RNA_pol_Rpb2_2"/>
</dbReference>
<dbReference type="InterPro" id="IPR037034">
    <property type="entry name" value="RNA_pol_Rpb2_2_sf"/>
</dbReference>
<dbReference type="InterPro" id="IPR007645">
    <property type="entry name" value="RNA_pol_Rpb2_3"/>
</dbReference>
<dbReference type="InterPro" id="IPR007641">
    <property type="entry name" value="RNA_pol_Rpb2_7"/>
</dbReference>
<dbReference type="InterPro" id="IPR014724">
    <property type="entry name" value="RNA_pol_RPB2_OB-fold"/>
</dbReference>
<dbReference type="NCBIfam" id="NF001616">
    <property type="entry name" value="PRK00405.1"/>
    <property type="match status" value="1"/>
</dbReference>
<dbReference type="NCBIfam" id="TIGR02013">
    <property type="entry name" value="rpoB"/>
    <property type="match status" value="1"/>
</dbReference>
<dbReference type="PANTHER" id="PTHR20856">
    <property type="entry name" value="DNA-DIRECTED RNA POLYMERASE I SUBUNIT 2"/>
    <property type="match status" value="1"/>
</dbReference>
<dbReference type="Pfam" id="PF04563">
    <property type="entry name" value="RNA_pol_Rpb2_1"/>
    <property type="match status" value="1"/>
</dbReference>
<dbReference type="Pfam" id="PF04561">
    <property type="entry name" value="RNA_pol_Rpb2_2"/>
    <property type="match status" value="2"/>
</dbReference>
<dbReference type="Pfam" id="PF04565">
    <property type="entry name" value="RNA_pol_Rpb2_3"/>
    <property type="match status" value="1"/>
</dbReference>
<dbReference type="Pfam" id="PF10385">
    <property type="entry name" value="RNA_pol_Rpb2_45"/>
    <property type="match status" value="1"/>
</dbReference>
<dbReference type="Pfam" id="PF00562">
    <property type="entry name" value="RNA_pol_Rpb2_6"/>
    <property type="match status" value="1"/>
</dbReference>
<dbReference type="Pfam" id="PF04560">
    <property type="entry name" value="RNA_pol_Rpb2_7"/>
    <property type="match status" value="1"/>
</dbReference>
<dbReference type="SUPFAM" id="SSF64484">
    <property type="entry name" value="beta and beta-prime subunits of DNA dependent RNA-polymerase"/>
    <property type="match status" value="1"/>
</dbReference>
<dbReference type="PROSITE" id="PS01166">
    <property type="entry name" value="RNA_POL_BETA"/>
    <property type="match status" value="1"/>
</dbReference>
<gene>
    <name evidence="1" type="primary">rpoB</name>
    <name type="ordered locus">OEOE_1375</name>
</gene>
<evidence type="ECO:0000255" key="1">
    <source>
        <dbReference type="HAMAP-Rule" id="MF_01321"/>
    </source>
</evidence>
<evidence type="ECO:0000256" key="2">
    <source>
        <dbReference type="SAM" id="MobiDB-lite"/>
    </source>
</evidence>
<protein>
    <recommendedName>
        <fullName evidence="1">DNA-directed RNA polymerase subunit beta</fullName>
        <shortName evidence="1">RNAP subunit beta</shortName>
        <ecNumber evidence="1">2.7.7.6</ecNumber>
    </recommendedName>
    <alternativeName>
        <fullName evidence="1">RNA polymerase subunit beta</fullName>
    </alternativeName>
    <alternativeName>
        <fullName evidence="1">Transcriptase subunit beta</fullName>
    </alternativeName>
</protein>
<keyword id="KW-0240">DNA-directed RNA polymerase</keyword>
<keyword id="KW-0548">Nucleotidyltransferase</keyword>
<keyword id="KW-1185">Reference proteome</keyword>
<keyword id="KW-0804">Transcription</keyword>
<keyword id="KW-0808">Transferase</keyword>
<proteinExistence type="inferred from homology"/>
<name>RPOB_OENOB</name>
<organism>
    <name type="scientific">Oenococcus oeni (strain ATCC BAA-331 / PSU-1)</name>
    <dbReference type="NCBI Taxonomy" id="203123"/>
    <lineage>
        <taxon>Bacteria</taxon>
        <taxon>Bacillati</taxon>
        <taxon>Bacillota</taxon>
        <taxon>Bacilli</taxon>
        <taxon>Lactobacillales</taxon>
        <taxon>Lactobacillaceae</taxon>
        <taxon>Oenococcus</taxon>
    </lineage>
</organism>
<reference key="1">
    <citation type="journal article" date="2006" name="Proc. Natl. Acad. Sci. U.S.A.">
        <title>Comparative genomics of the lactic acid bacteria.</title>
        <authorList>
            <person name="Makarova K.S."/>
            <person name="Slesarev A."/>
            <person name="Wolf Y.I."/>
            <person name="Sorokin A."/>
            <person name="Mirkin B."/>
            <person name="Koonin E.V."/>
            <person name="Pavlov A."/>
            <person name="Pavlova N."/>
            <person name="Karamychev V."/>
            <person name="Polouchine N."/>
            <person name="Shakhova V."/>
            <person name="Grigoriev I."/>
            <person name="Lou Y."/>
            <person name="Rohksar D."/>
            <person name="Lucas S."/>
            <person name="Huang K."/>
            <person name="Goodstein D.M."/>
            <person name="Hawkins T."/>
            <person name="Plengvidhya V."/>
            <person name="Welker D."/>
            <person name="Hughes J."/>
            <person name="Goh Y."/>
            <person name="Benson A."/>
            <person name="Baldwin K."/>
            <person name="Lee J.-H."/>
            <person name="Diaz-Muniz I."/>
            <person name="Dosti B."/>
            <person name="Smeianov V."/>
            <person name="Wechter W."/>
            <person name="Barabote R."/>
            <person name="Lorca G."/>
            <person name="Altermann E."/>
            <person name="Barrangou R."/>
            <person name="Ganesan B."/>
            <person name="Xie Y."/>
            <person name="Rawsthorne H."/>
            <person name="Tamir D."/>
            <person name="Parker C."/>
            <person name="Breidt F."/>
            <person name="Broadbent J.R."/>
            <person name="Hutkins R."/>
            <person name="O'Sullivan D."/>
            <person name="Steele J."/>
            <person name="Unlu G."/>
            <person name="Saier M.H. Jr."/>
            <person name="Klaenhammer T."/>
            <person name="Richardson P."/>
            <person name="Kozyavkin S."/>
            <person name="Weimer B.C."/>
            <person name="Mills D.A."/>
        </authorList>
    </citation>
    <scope>NUCLEOTIDE SEQUENCE [LARGE SCALE GENOMIC DNA]</scope>
    <source>
        <strain>ATCC BAA-331 / PSU-1</strain>
    </source>
</reference>
<feature type="chain" id="PRO_0000300361" description="DNA-directed RNA polymerase subunit beta">
    <location>
        <begin position="1"/>
        <end position="1197"/>
    </location>
</feature>
<feature type="region of interest" description="Disordered" evidence="2">
    <location>
        <begin position="581"/>
        <end position="603"/>
    </location>
</feature>
<feature type="region of interest" description="Disordered" evidence="2">
    <location>
        <begin position="1172"/>
        <end position="1197"/>
    </location>
</feature>
<feature type="compositionally biased region" description="Polar residues" evidence="2">
    <location>
        <begin position="581"/>
        <end position="597"/>
    </location>
</feature>
<comment type="function">
    <text evidence="1">DNA-dependent RNA polymerase catalyzes the transcription of DNA into RNA using the four ribonucleoside triphosphates as substrates.</text>
</comment>
<comment type="catalytic activity">
    <reaction evidence="1">
        <text>RNA(n) + a ribonucleoside 5'-triphosphate = RNA(n+1) + diphosphate</text>
        <dbReference type="Rhea" id="RHEA:21248"/>
        <dbReference type="Rhea" id="RHEA-COMP:14527"/>
        <dbReference type="Rhea" id="RHEA-COMP:17342"/>
        <dbReference type="ChEBI" id="CHEBI:33019"/>
        <dbReference type="ChEBI" id="CHEBI:61557"/>
        <dbReference type="ChEBI" id="CHEBI:140395"/>
        <dbReference type="EC" id="2.7.7.6"/>
    </reaction>
</comment>
<comment type="subunit">
    <text evidence="1">The RNAP catalytic core consists of 2 alpha, 1 beta, 1 beta' and 1 omega subunit. When a sigma factor is associated with the core the holoenzyme is formed, which can initiate transcription.</text>
</comment>
<comment type="similarity">
    <text evidence="1">Belongs to the RNA polymerase beta chain family.</text>
</comment>
<accession>Q04E85</accession>
<sequence length="1197" mass="133225">MVTHNVKINKHVTRRSYSSAKEVLEIPPLTEVQTASYKWFMDKGIKEMFNDIMPIEDFAGKLSLEYVDYSLGEPKYSLKESREQAVNYAAPLHVTLRLTNKETGEIKSQDVYFGEFPLMTEYGSFVINGAERVVVSQLVRSPGIYYNEDTDKTGRVVYGTTVIPNRGAWLELDTDAKGVANIRIDRTRKLPITELIRSFGFGSDSEIQDIFGDEIDSLNLAIEKDVHKDPSMSRVGEALEDIYERLRPGEPKTIDSSRSLLAARFFDPKRYDLGNVGRYKVNKKLSLKSRLLGQTLAEDILNSDGEVVVPKDTKIDKKSMKLISPLLDEEDFHVENLQPDEEGVLPDPIKVQTIKIFSQVDPTKVIKLIGNGHIDESIHHILPADIIAGMNYFFNLQEGVGATDDIDHLGNRRIRSVGELLENQFRIGLTRMERVVRERMSIQDSDTVTPQQLINIRPVVAVVKEFFGSSQLSQFMDQTNPLGELNHKRRLSALGPGGLTRDRAGYEVRDVHYSHYGRIDPIETPEGPNIGLITSLAVYGRINEYGFIETPYRRVDWDTHKVTDKIDYLTADVEDNYTIAQANSPLNDDGSFTNPTVTARHGDNNIETPIEDVDYMDVSPKQVVAVSTAAIPFLENDDSNRALMGANMQRQAVPLVAPHSPIVGTGIEYRAAVDSGLAQIAEEKGTVEYVDGRTIKVREEDGTLHEYPLMKFQRSNGGKNYNQTPIVKVGEKIEKGEVLADGPAMENGELALGQNPVIAFMTWHGYNFEDAIVLNERLVRDDVYTSIHIEEHESEARDTKLGPEEITREIPNVGEDQLKDLDDSGIIRIGAEVEDGDILVGKITPKGVTELSAEERLLHAIFGEKAREVRDTSLRVPHGGGGIIQDVEIFTRENGDELAPGVNMMVRVFIAQKRKIQVGDKMAGRHGNKGTVSVVVPEEDMPFMPDGRPIDILLSPMGVPSRMNIGQILELHLGMAAKKLGIKIMTPVFDGASDDEIIDALKEAGLDEDGKTVLYDGQTGEAFDNRISVGVMHYMKLAHMVDDKIHARSIGPYSLVTQQPLGGKAQFGGQRFGEMEVWALEAYGAAYTLQEILTYKSDDVRGRNKVFESIVKGQAIPKPGVPESFRVLVKELQALGLDMKVLNGKGQEVKMAQMDEDDNVATVDALEQIAKEKPDLFKGDDDDTPRIPATKLDEENV</sequence>